<comment type="function">
    <text evidence="1">Involved in peptide bond synthesis. Stimulates efficient translation and peptide-bond synthesis on native or reconstituted 70S ribosomes in vitro. Probably functions indirectly by altering the affinity of the ribosome for aminoacyl-tRNA, thus increasing their reactivity as acceptors for peptidyl transferase.</text>
</comment>
<comment type="pathway">
    <text evidence="1">Protein biosynthesis; polypeptide chain elongation.</text>
</comment>
<comment type="subcellular location">
    <subcellularLocation>
        <location evidence="1">Cytoplasm</location>
    </subcellularLocation>
</comment>
<comment type="similarity">
    <text evidence="1">Belongs to the elongation factor P family.</text>
</comment>
<organism>
    <name type="scientific">Erythrobacter litoralis (strain HTCC2594)</name>
    <dbReference type="NCBI Taxonomy" id="314225"/>
    <lineage>
        <taxon>Bacteria</taxon>
        <taxon>Pseudomonadati</taxon>
        <taxon>Pseudomonadota</taxon>
        <taxon>Alphaproteobacteria</taxon>
        <taxon>Sphingomonadales</taxon>
        <taxon>Erythrobacteraceae</taxon>
        <taxon>Erythrobacter/Porphyrobacter group</taxon>
        <taxon>Erythrobacter</taxon>
    </lineage>
</organism>
<evidence type="ECO:0000255" key="1">
    <source>
        <dbReference type="HAMAP-Rule" id="MF_00141"/>
    </source>
</evidence>
<keyword id="KW-0963">Cytoplasm</keyword>
<keyword id="KW-0251">Elongation factor</keyword>
<keyword id="KW-0648">Protein biosynthesis</keyword>
<keyword id="KW-1185">Reference proteome</keyword>
<sequence length="187" mass="20967">MKISGVDIRPGNIIEYEGGIWKVAKIQHTQPGKGGAYMQVEMKNLQDGRKTNVRFRSADTVEKVRLDTQDYQFLYEDGDQLVFMDQDTYEQINLDSDLLGDARPFLQDGMTVQLELWEEKPISVQLPQQVEADIVEADAVVKGQTASSSYKPAVLDNGVRIMVPPHIESGTRIVVDVYEQTYVGKAG</sequence>
<name>EFP_ERYLH</name>
<gene>
    <name evidence="1" type="primary">efp</name>
    <name type="ordered locus">ELI_05265</name>
</gene>
<protein>
    <recommendedName>
        <fullName evidence="1">Elongation factor P</fullName>
        <shortName evidence="1">EF-P</shortName>
    </recommendedName>
</protein>
<feature type="chain" id="PRO_1000010742" description="Elongation factor P">
    <location>
        <begin position="1"/>
        <end position="187"/>
    </location>
</feature>
<dbReference type="EMBL" id="CP000157">
    <property type="protein sequence ID" value="ABC63145.1"/>
    <property type="molecule type" value="Genomic_DNA"/>
</dbReference>
<dbReference type="RefSeq" id="WP_011413981.1">
    <property type="nucleotide sequence ID" value="NC_007722.1"/>
</dbReference>
<dbReference type="SMR" id="Q2NAZ6"/>
<dbReference type="STRING" id="314225.ELI_05265"/>
<dbReference type="KEGG" id="eli:ELI_05265"/>
<dbReference type="eggNOG" id="COG0231">
    <property type="taxonomic scope" value="Bacteria"/>
</dbReference>
<dbReference type="HOGENOM" id="CLU_074944_1_1_5"/>
<dbReference type="OrthoDB" id="9801844at2"/>
<dbReference type="UniPathway" id="UPA00345"/>
<dbReference type="Proteomes" id="UP000008808">
    <property type="component" value="Chromosome"/>
</dbReference>
<dbReference type="GO" id="GO:0005737">
    <property type="term" value="C:cytoplasm"/>
    <property type="evidence" value="ECO:0007669"/>
    <property type="project" value="UniProtKB-SubCell"/>
</dbReference>
<dbReference type="GO" id="GO:0003746">
    <property type="term" value="F:translation elongation factor activity"/>
    <property type="evidence" value="ECO:0007669"/>
    <property type="project" value="UniProtKB-UniRule"/>
</dbReference>
<dbReference type="GO" id="GO:0043043">
    <property type="term" value="P:peptide biosynthetic process"/>
    <property type="evidence" value="ECO:0007669"/>
    <property type="project" value="InterPro"/>
</dbReference>
<dbReference type="CDD" id="cd04470">
    <property type="entry name" value="S1_EF-P_repeat_1"/>
    <property type="match status" value="1"/>
</dbReference>
<dbReference type="CDD" id="cd05794">
    <property type="entry name" value="S1_EF-P_repeat_2"/>
    <property type="match status" value="1"/>
</dbReference>
<dbReference type="FunFam" id="2.30.30.30:FF:000003">
    <property type="entry name" value="Elongation factor P"/>
    <property type="match status" value="1"/>
</dbReference>
<dbReference type="FunFam" id="2.40.50.140:FF:000004">
    <property type="entry name" value="Elongation factor P"/>
    <property type="match status" value="1"/>
</dbReference>
<dbReference type="FunFam" id="2.40.50.140:FF:000009">
    <property type="entry name" value="Elongation factor P"/>
    <property type="match status" value="1"/>
</dbReference>
<dbReference type="Gene3D" id="2.30.30.30">
    <property type="match status" value="1"/>
</dbReference>
<dbReference type="Gene3D" id="2.40.50.140">
    <property type="entry name" value="Nucleic acid-binding proteins"/>
    <property type="match status" value="2"/>
</dbReference>
<dbReference type="HAMAP" id="MF_00141">
    <property type="entry name" value="EF_P"/>
    <property type="match status" value="1"/>
</dbReference>
<dbReference type="InterPro" id="IPR015365">
    <property type="entry name" value="Elong-fact-P_C"/>
</dbReference>
<dbReference type="InterPro" id="IPR012340">
    <property type="entry name" value="NA-bd_OB-fold"/>
</dbReference>
<dbReference type="InterPro" id="IPR014722">
    <property type="entry name" value="Rib_uL2_dom2"/>
</dbReference>
<dbReference type="InterPro" id="IPR020599">
    <property type="entry name" value="Transl_elong_fac_P/YeiP"/>
</dbReference>
<dbReference type="InterPro" id="IPR013185">
    <property type="entry name" value="Transl_elong_KOW-like"/>
</dbReference>
<dbReference type="InterPro" id="IPR001059">
    <property type="entry name" value="Transl_elong_P/YeiP_cen"/>
</dbReference>
<dbReference type="InterPro" id="IPR013852">
    <property type="entry name" value="Transl_elong_P/YeiP_CS"/>
</dbReference>
<dbReference type="InterPro" id="IPR011768">
    <property type="entry name" value="Transl_elongation_fac_P"/>
</dbReference>
<dbReference type="InterPro" id="IPR008991">
    <property type="entry name" value="Translation_prot_SH3-like_sf"/>
</dbReference>
<dbReference type="NCBIfam" id="TIGR00038">
    <property type="entry name" value="efp"/>
    <property type="match status" value="1"/>
</dbReference>
<dbReference type="NCBIfam" id="NF001810">
    <property type="entry name" value="PRK00529.1"/>
    <property type="match status" value="1"/>
</dbReference>
<dbReference type="PANTHER" id="PTHR30053">
    <property type="entry name" value="ELONGATION FACTOR P"/>
    <property type="match status" value="1"/>
</dbReference>
<dbReference type="PANTHER" id="PTHR30053:SF14">
    <property type="entry name" value="TRANSLATION ELONGATION FACTOR KOW-LIKE DOMAIN-CONTAINING PROTEIN"/>
    <property type="match status" value="1"/>
</dbReference>
<dbReference type="Pfam" id="PF01132">
    <property type="entry name" value="EFP"/>
    <property type="match status" value="1"/>
</dbReference>
<dbReference type="Pfam" id="PF08207">
    <property type="entry name" value="EFP_N"/>
    <property type="match status" value="1"/>
</dbReference>
<dbReference type="Pfam" id="PF09285">
    <property type="entry name" value="Elong-fact-P_C"/>
    <property type="match status" value="1"/>
</dbReference>
<dbReference type="PIRSF" id="PIRSF005901">
    <property type="entry name" value="EF-P"/>
    <property type="match status" value="1"/>
</dbReference>
<dbReference type="SMART" id="SM01185">
    <property type="entry name" value="EFP"/>
    <property type="match status" value="1"/>
</dbReference>
<dbReference type="SMART" id="SM00841">
    <property type="entry name" value="Elong-fact-P_C"/>
    <property type="match status" value="1"/>
</dbReference>
<dbReference type="SUPFAM" id="SSF50249">
    <property type="entry name" value="Nucleic acid-binding proteins"/>
    <property type="match status" value="2"/>
</dbReference>
<dbReference type="SUPFAM" id="SSF50104">
    <property type="entry name" value="Translation proteins SH3-like domain"/>
    <property type="match status" value="1"/>
</dbReference>
<dbReference type="PROSITE" id="PS01275">
    <property type="entry name" value="EFP"/>
    <property type="match status" value="1"/>
</dbReference>
<proteinExistence type="inferred from homology"/>
<reference key="1">
    <citation type="journal article" date="2009" name="J. Bacteriol.">
        <title>Complete genome sequence of Erythrobacter litoralis HTCC2594.</title>
        <authorList>
            <person name="Oh H.M."/>
            <person name="Giovannoni S.J."/>
            <person name="Ferriera S."/>
            <person name="Johnson J."/>
            <person name="Cho J.C."/>
        </authorList>
    </citation>
    <scope>NUCLEOTIDE SEQUENCE [LARGE SCALE GENOMIC DNA]</scope>
    <source>
        <strain>HTCC2594</strain>
    </source>
</reference>
<accession>Q2NAZ6</accession>